<feature type="transit peptide" description="Mitochondrion" evidence="1">
    <location>
        <begin position="1"/>
        <end position="91"/>
    </location>
</feature>
<feature type="chain" id="PRO_0000310292" description="ABC1 family protein C21C3.03, mitochondrial">
    <location>
        <begin position="92"/>
        <end position="692"/>
    </location>
</feature>
<feature type="transmembrane region" description="Helical" evidence="1">
    <location>
        <begin position="96"/>
        <end position="116"/>
    </location>
</feature>
<feature type="transmembrane region" description="Helical" evidence="1">
    <location>
        <begin position="161"/>
        <end position="181"/>
    </location>
</feature>
<protein>
    <recommendedName>
        <fullName>ABC1 family protein C21C3.03, mitochondrial</fullName>
    </recommendedName>
</protein>
<name>YOS3_SCHPO</name>
<dbReference type="EMBL" id="CU329671">
    <property type="protein sequence ID" value="CAB76039.2"/>
    <property type="molecule type" value="Genomic_DNA"/>
</dbReference>
<dbReference type="PIR" id="T50347">
    <property type="entry name" value="T50347"/>
</dbReference>
<dbReference type="BioGRID" id="276824">
    <property type="interactions" value="21"/>
</dbReference>
<dbReference type="FunCoup" id="Q9P7M0">
    <property type="interactions" value="34"/>
</dbReference>
<dbReference type="STRING" id="284812.Q9P7M0"/>
<dbReference type="PaxDb" id="4896-SPBC21C3.03.1"/>
<dbReference type="EnsemblFungi" id="SPBC21C3.03.1">
    <property type="protein sequence ID" value="SPBC21C3.03.1:pep"/>
    <property type="gene ID" value="SPBC21C3.03"/>
</dbReference>
<dbReference type="KEGG" id="spo:2540293"/>
<dbReference type="PomBase" id="SPBC21C3.03"/>
<dbReference type="VEuPathDB" id="FungiDB:SPBC21C3.03"/>
<dbReference type="eggNOG" id="KOG1236">
    <property type="taxonomic scope" value="Eukaryota"/>
</dbReference>
<dbReference type="HOGENOM" id="CLU_006533_6_0_1"/>
<dbReference type="InParanoid" id="Q9P7M0"/>
<dbReference type="OMA" id="SMVRTHH"/>
<dbReference type="PRO" id="PR:Q9P7M0"/>
<dbReference type="Proteomes" id="UP000002485">
    <property type="component" value="Chromosome II"/>
</dbReference>
<dbReference type="GO" id="GO:0031966">
    <property type="term" value="C:mitochondrial membrane"/>
    <property type="evidence" value="ECO:0000305"/>
    <property type="project" value="PomBase"/>
</dbReference>
<dbReference type="GO" id="GO:0005739">
    <property type="term" value="C:mitochondrion"/>
    <property type="evidence" value="ECO:0007005"/>
    <property type="project" value="PomBase"/>
</dbReference>
<dbReference type="GO" id="GO:0016301">
    <property type="term" value="F:kinase activity"/>
    <property type="evidence" value="ECO:0000255"/>
    <property type="project" value="PomBase"/>
</dbReference>
<dbReference type="GO" id="GO:0007005">
    <property type="term" value="P:mitochondrion organization"/>
    <property type="evidence" value="ECO:0000266"/>
    <property type="project" value="PomBase"/>
</dbReference>
<dbReference type="CDD" id="cd13971">
    <property type="entry name" value="ADCK2-like"/>
    <property type="match status" value="1"/>
</dbReference>
<dbReference type="InterPro" id="IPR004147">
    <property type="entry name" value="ABC1_dom"/>
</dbReference>
<dbReference type="InterPro" id="IPR044095">
    <property type="entry name" value="ADCK2_dom"/>
</dbReference>
<dbReference type="InterPro" id="IPR052402">
    <property type="entry name" value="ADCK_kinase"/>
</dbReference>
<dbReference type="InterPro" id="IPR011009">
    <property type="entry name" value="Kinase-like_dom_sf"/>
</dbReference>
<dbReference type="PANTHER" id="PTHR45890:SF1">
    <property type="entry name" value="AARF DOMAIN CONTAINING KINASE 2"/>
    <property type="match status" value="1"/>
</dbReference>
<dbReference type="PANTHER" id="PTHR45890">
    <property type="entry name" value="AARF DOMAIN CONTAINING KINASE 2 (PREDICTED)"/>
    <property type="match status" value="1"/>
</dbReference>
<dbReference type="Pfam" id="PF03109">
    <property type="entry name" value="ABC1"/>
    <property type="match status" value="2"/>
</dbReference>
<dbReference type="SUPFAM" id="SSF56112">
    <property type="entry name" value="Protein kinase-like (PK-like)"/>
    <property type="match status" value="1"/>
</dbReference>
<organism>
    <name type="scientific">Schizosaccharomyces pombe (strain 972 / ATCC 24843)</name>
    <name type="common">Fission yeast</name>
    <dbReference type="NCBI Taxonomy" id="284812"/>
    <lineage>
        <taxon>Eukaryota</taxon>
        <taxon>Fungi</taxon>
        <taxon>Dikarya</taxon>
        <taxon>Ascomycota</taxon>
        <taxon>Taphrinomycotina</taxon>
        <taxon>Schizosaccharomycetes</taxon>
        <taxon>Schizosaccharomycetales</taxon>
        <taxon>Schizosaccharomycetaceae</taxon>
        <taxon>Schizosaccharomyces</taxon>
    </lineage>
</organism>
<comment type="subcellular location">
    <subcellularLocation>
        <location evidence="2">Mitochondrion membrane</location>
        <topology evidence="2">Multi-pass membrane protein</topology>
    </subcellularLocation>
</comment>
<comment type="similarity">
    <text evidence="3">Belongs to the protein kinase superfamily. ADCK protein kinase family.</text>
</comment>
<keyword id="KW-0472">Membrane</keyword>
<keyword id="KW-0496">Mitochondrion</keyword>
<keyword id="KW-1185">Reference proteome</keyword>
<keyword id="KW-0809">Transit peptide</keyword>
<keyword id="KW-0812">Transmembrane</keyword>
<keyword id="KW-1133">Transmembrane helix</keyword>
<proteinExistence type="inferred from homology"/>
<evidence type="ECO:0000255" key="1"/>
<evidence type="ECO:0000269" key="2">
    <source>
    </source>
</evidence>
<evidence type="ECO:0000305" key="3"/>
<reference key="1">
    <citation type="journal article" date="2002" name="Nature">
        <title>The genome sequence of Schizosaccharomyces pombe.</title>
        <authorList>
            <person name="Wood V."/>
            <person name="Gwilliam R."/>
            <person name="Rajandream M.A."/>
            <person name="Lyne M.H."/>
            <person name="Lyne R."/>
            <person name="Stewart A."/>
            <person name="Sgouros J.G."/>
            <person name="Peat N."/>
            <person name="Hayles J."/>
            <person name="Baker S.G."/>
            <person name="Basham D."/>
            <person name="Bowman S."/>
            <person name="Brooks K."/>
            <person name="Brown D."/>
            <person name="Brown S."/>
            <person name="Chillingworth T."/>
            <person name="Churcher C.M."/>
            <person name="Collins M."/>
            <person name="Connor R."/>
            <person name="Cronin A."/>
            <person name="Davis P."/>
            <person name="Feltwell T."/>
            <person name="Fraser A."/>
            <person name="Gentles S."/>
            <person name="Goble A."/>
            <person name="Hamlin N."/>
            <person name="Harris D.E."/>
            <person name="Hidalgo J."/>
            <person name="Hodgson G."/>
            <person name="Holroyd S."/>
            <person name="Hornsby T."/>
            <person name="Howarth S."/>
            <person name="Huckle E.J."/>
            <person name="Hunt S."/>
            <person name="Jagels K."/>
            <person name="James K.D."/>
            <person name="Jones L."/>
            <person name="Jones M."/>
            <person name="Leather S."/>
            <person name="McDonald S."/>
            <person name="McLean J."/>
            <person name="Mooney P."/>
            <person name="Moule S."/>
            <person name="Mungall K.L."/>
            <person name="Murphy L.D."/>
            <person name="Niblett D."/>
            <person name="Odell C."/>
            <person name="Oliver K."/>
            <person name="O'Neil S."/>
            <person name="Pearson D."/>
            <person name="Quail M.A."/>
            <person name="Rabbinowitsch E."/>
            <person name="Rutherford K.M."/>
            <person name="Rutter S."/>
            <person name="Saunders D."/>
            <person name="Seeger K."/>
            <person name="Sharp S."/>
            <person name="Skelton J."/>
            <person name="Simmonds M.N."/>
            <person name="Squares R."/>
            <person name="Squares S."/>
            <person name="Stevens K."/>
            <person name="Taylor K."/>
            <person name="Taylor R.G."/>
            <person name="Tivey A."/>
            <person name="Walsh S.V."/>
            <person name="Warren T."/>
            <person name="Whitehead S."/>
            <person name="Woodward J.R."/>
            <person name="Volckaert G."/>
            <person name="Aert R."/>
            <person name="Robben J."/>
            <person name="Grymonprez B."/>
            <person name="Weltjens I."/>
            <person name="Vanstreels E."/>
            <person name="Rieger M."/>
            <person name="Schaefer M."/>
            <person name="Mueller-Auer S."/>
            <person name="Gabel C."/>
            <person name="Fuchs M."/>
            <person name="Duesterhoeft A."/>
            <person name="Fritzc C."/>
            <person name="Holzer E."/>
            <person name="Moestl D."/>
            <person name="Hilbert H."/>
            <person name="Borzym K."/>
            <person name="Langer I."/>
            <person name="Beck A."/>
            <person name="Lehrach H."/>
            <person name="Reinhardt R."/>
            <person name="Pohl T.M."/>
            <person name="Eger P."/>
            <person name="Zimmermann W."/>
            <person name="Wedler H."/>
            <person name="Wambutt R."/>
            <person name="Purnelle B."/>
            <person name="Goffeau A."/>
            <person name="Cadieu E."/>
            <person name="Dreano S."/>
            <person name="Gloux S."/>
            <person name="Lelaure V."/>
            <person name="Mottier S."/>
            <person name="Galibert F."/>
            <person name="Aves S.J."/>
            <person name="Xiang Z."/>
            <person name="Hunt C."/>
            <person name="Moore K."/>
            <person name="Hurst S.M."/>
            <person name="Lucas M."/>
            <person name="Rochet M."/>
            <person name="Gaillardin C."/>
            <person name="Tallada V.A."/>
            <person name="Garzon A."/>
            <person name="Thode G."/>
            <person name="Daga R.R."/>
            <person name="Cruzado L."/>
            <person name="Jimenez J."/>
            <person name="Sanchez M."/>
            <person name="del Rey F."/>
            <person name="Benito J."/>
            <person name="Dominguez A."/>
            <person name="Revuelta J.L."/>
            <person name="Moreno S."/>
            <person name="Armstrong J."/>
            <person name="Forsburg S.L."/>
            <person name="Cerutti L."/>
            <person name="Lowe T."/>
            <person name="McCombie W.R."/>
            <person name="Paulsen I."/>
            <person name="Potashkin J."/>
            <person name="Shpakovski G.V."/>
            <person name="Ussery D."/>
            <person name="Barrell B.G."/>
            <person name="Nurse P."/>
        </authorList>
    </citation>
    <scope>NUCLEOTIDE SEQUENCE [LARGE SCALE GENOMIC DNA]</scope>
    <source>
        <strain>972 / ATCC 24843</strain>
    </source>
</reference>
<reference key="2">
    <citation type="journal article" date="2011" name="Science">
        <title>Comparative functional genomics of the fission yeasts.</title>
        <authorList>
            <person name="Rhind N."/>
            <person name="Chen Z."/>
            <person name="Yassour M."/>
            <person name="Thompson D.A."/>
            <person name="Haas B.J."/>
            <person name="Habib N."/>
            <person name="Wapinski I."/>
            <person name="Roy S."/>
            <person name="Lin M.F."/>
            <person name="Heiman D.I."/>
            <person name="Young S.K."/>
            <person name="Furuya K."/>
            <person name="Guo Y."/>
            <person name="Pidoux A."/>
            <person name="Chen H.M."/>
            <person name="Robbertse B."/>
            <person name="Goldberg J.M."/>
            <person name="Aoki K."/>
            <person name="Bayne E.H."/>
            <person name="Berlin A.M."/>
            <person name="Desjardins C.A."/>
            <person name="Dobbs E."/>
            <person name="Dukaj L."/>
            <person name="Fan L."/>
            <person name="FitzGerald M.G."/>
            <person name="French C."/>
            <person name="Gujja S."/>
            <person name="Hansen K."/>
            <person name="Keifenheim D."/>
            <person name="Levin J.Z."/>
            <person name="Mosher R.A."/>
            <person name="Mueller C.A."/>
            <person name="Pfiffner J."/>
            <person name="Priest M."/>
            <person name="Russ C."/>
            <person name="Smialowska A."/>
            <person name="Swoboda P."/>
            <person name="Sykes S.M."/>
            <person name="Vaughn M."/>
            <person name="Vengrova S."/>
            <person name="Yoder R."/>
            <person name="Zeng Q."/>
            <person name="Allshire R."/>
            <person name="Baulcombe D."/>
            <person name="Birren B.W."/>
            <person name="Brown W."/>
            <person name="Ekwall K."/>
            <person name="Kellis M."/>
            <person name="Leatherwood J."/>
            <person name="Levin H."/>
            <person name="Margalit H."/>
            <person name="Martienssen R."/>
            <person name="Nieduszynski C.A."/>
            <person name="Spatafora J.W."/>
            <person name="Friedman N."/>
            <person name="Dalgaard J.Z."/>
            <person name="Baumann P."/>
            <person name="Niki H."/>
            <person name="Regev A."/>
            <person name="Nusbaum C."/>
        </authorList>
    </citation>
    <scope>REVISION OF GENE MODEL</scope>
</reference>
<reference key="3">
    <citation type="journal article" date="2006" name="Nat. Biotechnol.">
        <title>ORFeome cloning and global analysis of protein localization in the fission yeast Schizosaccharomyces pombe.</title>
        <authorList>
            <person name="Matsuyama A."/>
            <person name="Arai R."/>
            <person name="Yashiroda Y."/>
            <person name="Shirai A."/>
            <person name="Kamata A."/>
            <person name="Sekido S."/>
            <person name="Kobayashi Y."/>
            <person name="Hashimoto A."/>
            <person name="Hamamoto M."/>
            <person name="Hiraoka Y."/>
            <person name="Horinouchi S."/>
            <person name="Yoshida M."/>
        </authorList>
    </citation>
    <scope>SUBCELLULAR LOCATION [LARGE SCALE ANALYSIS]</scope>
</reference>
<sequence length="692" mass="79369">MISFSHWNSHIRSGLSLSMIPSANSRFAFIIQRNYIPVVNSQNTRWKRLCGTQSVWSPYKKKHVLVNRLKHISLFPKPIFARKFTTRQKSEDQKQWRILRITFLVLPFTVGGLWILYRVKNRKNNIFSFDELELEERSNRPRSIFGKIKQFFNILLRSFNLFIIFSPIIITLPFIALISFLHLRSLSSLTVSIWLRFLVTQLERAGATFIKLGQWAASRTDLFPPAFCKTLSKLHSHVTPHSLAYTQSVICKTYKVESIEEIFVNFNPIPIGVGAIAQVYTATIKKAATQQDNSYFTSMLQSIGFRQKNISDAPVTQDVAIKVLHPNVEKYISLDLQILGFFAKLINLVPSMKWLSLPDEVKVFGAMLNQQLNLHYEALHLNQFRLNFRGNRYVEFPAPYDDYTTNQILLEDYMPGIPLSAFLKHKSGPFNKLLANTGNNALFQMLIVDNFTHADLHPGNVLVKFYKGIPKTIFNQDNEINDSIYKILSTCSTEEWDSAMEELNILGYRPTLVFLDAGLVTKLSTQDQKNFLDLFQAVLTFHGYEAGLLMVERSRQTERVINKDIFALKMEHLLNEIQKSTLSLKSLQIGTILQEVMTMAREHHVRIEANFANTVLSILLVEGAGRQLYPEMDLLSNATPYLRSASSKSNVSLTNPMVQLWIALEARQFLLLSTSKETVEKWVKSDMIAPNI</sequence>
<accession>Q9P7M0</accession>
<gene>
    <name type="ORF">SPBC21C3.03</name>
</gene>